<evidence type="ECO:0000255" key="1">
    <source>
        <dbReference type="HAMAP-Rule" id="MF_00318"/>
    </source>
</evidence>
<organism>
    <name type="scientific">Mycobacterium ulcerans (strain Agy99)</name>
    <dbReference type="NCBI Taxonomy" id="362242"/>
    <lineage>
        <taxon>Bacteria</taxon>
        <taxon>Bacillati</taxon>
        <taxon>Actinomycetota</taxon>
        <taxon>Actinomycetes</taxon>
        <taxon>Mycobacteriales</taxon>
        <taxon>Mycobacteriaceae</taxon>
        <taxon>Mycobacterium</taxon>
        <taxon>Mycobacterium ulcerans group</taxon>
    </lineage>
</organism>
<protein>
    <recommendedName>
        <fullName evidence="1">Enolase</fullName>
        <ecNumber evidence="1">4.2.1.11</ecNumber>
    </recommendedName>
    <alternativeName>
        <fullName evidence="1">2-phospho-D-glycerate hydro-lyase</fullName>
    </alternativeName>
    <alternativeName>
        <fullName evidence="1">2-phosphoglycerate dehydratase</fullName>
    </alternativeName>
</protein>
<proteinExistence type="inferred from homology"/>
<keyword id="KW-0963">Cytoplasm</keyword>
<keyword id="KW-0324">Glycolysis</keyword>
<keyword id="KW-0456">Lyase</keyword>
<keyword id="KW-0460">Magnesium</keyword>
<keyword id="KW-0479">Metal-binding</keyword>
<keyword id="KW-0964">Secreted</keyword>
<reference key="1">
    <citation type="journal article" date="2007" name="Genome Res.">
        <title>Reductive evolution and niche adaptation inferred from the genome of Mycobacterium ulcerans, the causative agent of Buruli ulcer.</title>
        <authorList>
            <person name="Stinear T.P."/>
            <person name="Seemann T."/>
            <person name="Pidot S."/>
            <person name="Frigui W."/>
            <person name="Reysset G."/>
            <person name="Garnier T."/>
            <person name="Meurice G."/>
            <person name="Simon D."/>
            <person name="Bouchier C."/>
            <person name="Ma L."/>
            <person name="Tichit M."/>
            <person name="Porter J.L."/>
            <person name="Ryan J."/>
            <person name="Johnson P.D.R."/>
            <person name="Davies J.K."/>
            <person name="Jenkin G.A."/>
            <person name="Small P.L.C."/>
            <person name="Jones L.M."/>
            <person name="Tekaia F."/>
            <person name="Laval F."/>
            <person name="Daffe M."/>
            <person name="Parkhill J."/>
            <person name="Cole S.T."/>
        </authorList>
    </citation>
    <scope>NUCLEOTIDE SEQUENCE [LARGE SCALE GENOMIC DNA]</scope>
    <source>
        <strain>Agy99</strain>
    </source>
</reference>
<feature type="chain" id="PRO_0000280866" description="Enolase">
    <location>
        <begin position="1"/>
        <end position="428"/>
    </location>
</feature>
<feature type="active site" description="Proton donor" evidence="1">
    <location>
        <position position="204"/>
    </location>
</feature>
<feature type="active site" description="Proton acceptor" evidence="1">
    <location>
        <position position="334"/>
    </location>
</feature>
<feature type="binding site" evidence="1">
    <location>
        <position position="162"/>
    </location>
    <ligand>
        <name>(2R)-2-phosphoglycerate</name>
        <dbReference type="ChEBI" id="CHEBI:58289"/>
    </ligand>
</feature>
<feature type="binding site" evidence="1">
    <location>
        <position position="241"/>
    </location>
    <ligand>
        <name>Mg(2+)</name>
        <dbReference type="ChEBI" id="CHEBI:18420"/>
    </ligand>
</feature>
<feature type="binding site" evidence="1">
    <location>
        <position position="282"/>
    </location>
    <ligand>
        <name>Mg(2+)</name>
        <dbReference type="ChEBI" id="CHEBI:18420"/>
    </ligand>
</feature>
<feature type="binding site" evidence="1">
    <location>
        <position position="309"/>
    </location>
    <ligand>
        <name>Mg(2+)</name>
        <dbReference type="ChEBI" id="CHEBI:18420"/>
    </ligand>
</feature>
<feature type="binding site" evidence="1">
    <location>
        <position position="334"/>
    </location>
    <ligand>
        <name>(2R)-2-phosphoglycerate</name>
        <dbReference type="ChEBI" id="CHEBI:58289"/>
    </ligand>
</feature>
<feature type="binding site" evidence="1">
    <location>
        <position position="363"/>
    </location>
    <ligand>
        <name>(2R)-2-phosphoglycerate</name>
        <dbReference type="ChEBI" id="CHEBI:58289"/>
    </ligand>
</feature>
<feature type="binding site" evidence="1">
    <location>
        <position position="364"/>
    </location>
    <ligand>
        <name>(2R)-2-phosphoglycerate</name>
        <dbReference type="ChEBI" id="CHEBI:58289"/>
    </ligand>
</feature>
<feature type="binding site" evidence="1">
    <location>
        <position position="385"/>
    </location>
    <ligand>
        <name>(2R)-2-phosphoglycerate</name>
        <dbReference type="ChEBI" id="CHEBI:58289"/>
    </ligand>
</feature>
<dbReference type="EC" id="4.2.1.11" evidence="1"/>
<dbReference type="EMBL" id="CP000325">
    <property type="protein sequence ID" value="ABL06574.1"/>
    <property type="molecule type" value="Genomic_DNA"/>
</dbReference>
<dbReference type="RefSeq" id="WP_011742169.1">
    <property type="nucleotide sequence ID" value="NC_008611.1"/>
</dbReference>
<dbReference type="SMR" id="A0PW55"/>
<dbReference type="GeneID" id="93435611"/>
<dbReference type="KEGG" id="mul:MUL_4631"/>
<dbReference type="eggNOG" id="COG4948">
    <property type="taxonomic scope" value="Bacteria"/>
</dbReference>
<dbReference type="HOGENOM" id="CLU_031223_2_1_11"/>
<dbReference type="UniPathway" id="UPA00109">
    <property type="reaction ID" value="UER00187"/>
</dbReference>
<dbReference type="Proteomes" id="UP000000765">
    <property type="component" value="Chromosome"/>
</dbReference>
<dbReference type="GO" id="GO:0009986">
    <property type="term" value="C:cell surface"/>
    <property type="evidence" value="ECO:0007669"/>
    <property type="project" value="UniProtKB-SubCell"/>
</dbReference>
<dbReference type="GO" id="GO:0005576">
    <property type="term" value="C:extracellular region"/>
    <property type="evidence" value="ECO:0007669"/>
    <property type="project" value="UniProtKB-SubCell"/>
</dbReference>
<dbReference type="GO" id="GO:0000015">
    <property type="term" value="C:phosphopyruvate hydratase complex"/>
    <property type="evidence" value="ECO:0007669"/>
    <property type="project" value="InterPro"/>
</dbReference>
<dbReference type="GO" id="GO:0000287">
    <property type="term" value="F:magnesium ion binding"/>
    <property type="evidence" value="ECO:0007669"/>
    <property type="project" value="UniProtKB-UniRule"/>
</dbReference>
<dbReference type="GO" id="GO:0004634">
    <property type="term" value="F:phosphopyruvate hydratase activity"/>
    <property type="evidence" value="ECO:0007669"/>
    <property type="project" value="UniProtKB-UniRule"/>
</dbReference>
<dbReference type="GO" id="GO:0006096">
    <property type="term" value="P:glycolytic process"/>
    <property type="evidence" value="ECO:0007669"/>
    <property type="project" value="UniProtKB-UniRule"/>
</dbReference>
<dbReference type="CDD" id="cd03313">
    <property type="entry name" value="enolase"/>
    <property type="match status" value="1"/>
</dbReference>
<dbReference type="FunFam" id="3.20.20.120:FF:000001">
    <property type="entry name" value="Enolase"/>
    <property type="match status" value="1"/>
</dbReference>
<dbReference type="FunFam" id="3.30.390.10:FF:000001">
    <property type="entry name" value="Enolase"/>
    <property type="match status" value="1"/>
</dbReference>
<dbReference type="Gene3D" id="3.20.20.120">
    <property type="entry name" value="Enolase-like C-terminal domain"/>
    <property type="match status" value="1"/>
</dbReference>
<dbReference type="Gene3D" id="3.30.390.10">
    <property type="entry name" value="Enolase-like, N-terminal domain"/>
    <property type="match status" value="1"/>
</dbReference>
<dbReference type="HAMAP" id="MF_00318">
    <property type="entry name" value="Enolase"/>
    <property type="match status" value="1"/>
</dbReference>
<dbReference type="InterPro" id="IPR000941">
    <property type="entry name" value="Enolase"/>
</dbReference>
<dbReference type="InterPro" id="IPR036849">
    <property type="entry name" value="Enolase-like_C_sf"/>
</dbReference>
<dbReference type="InterPro" id="IPR029017">
    <property type="entry name" value="Enolase-like_N"/>
</dbReference>
<dbReference type="InterPro" id="IPR020810">
    <property type="entry name" value="Enolase_C"/>
</dbReference>
<dbReference type="InterPro" id="IPR020809">
    <property type="entry name" value="Enolase_CS"/>
</dbReference>
<dbReference type="InterPro" id="IPR020811">
    <property type="entry name" value="Enolase_N"/>
</dbReference>
<dbReference type="NCBIfam" id="TIGR01060">
    <property type="entry name" value="eno"/>
    <property type="match status" value="1"/>
</dbReference>
<dbReference type="PANTHER" id="PTHR11902">
    <property type="entry name" value="ENOLASE"/>
    <property type="match status" value="1"/>
</dbReference>
<dbReference type="PANTHER" id="PTHR11902:SF1">
    <property type="entry name" value="ENOLASE"/>
    <property type="match status" value="1"/>
</dbReference>
<dbReference type="Pfam" id="PF00113">
    <property type="entry name" value="Enolase_C"/>
    <property type="match status" value="1"/>
</dbReference>
<dbReference type="Pfam" id="PF03952">
    <property type="entry name" value="Enolase_N"/>
    <property type="match status" value="1"/>
</dbReference>
<dbReference type="PIRSF" id="PIRSF001400">
    <property type="entry name" value="Enolase"/>
    <property type="match status" value="1"/>
</dbReference>
<dbReference type="PRINTS" id="PR00148">
    <property type="entry name" value="ENOLASE"/>
</dbReference>
<dbReference type="SFLD" id="SFLDF00002">
    <property type="entry name" value="enolase"/>
    <property type="match status" value="1"/>
</dbReference>
<dbReference type="SFLD" id="SFLDG00178">
    <property type="entry name" value="enolase"/>
    <property type="match status" value="1"/>
</dbReference>
<dbReference type="SMART" id="SM01192">
    <property type="entry name" value="Enolase_C"/>
    <property type="match status" value="1"/>
</dbReference>
<dbReference type="SMART" id="SM01193">
    <property type="entry name" value="Enolase_N"/>
    <property type="match status" value="1"/>
</dbReference>
<dbReference type="SUPFAM" id="SSF51604">
    <property type="entry name" value="Enolase C-terminal domain-like"/>
    <property type="match status" value="1"/>
</dbReference>
<dbReference type="SUPFAM" id="SSF54826">
    <property type="entry name" value="Enolase N-terminal domain-like"/>
    <property type="match status" value="1"/>
</dbReference>
<dbReference type="PROSITE" id="PS00164">
    <property type="entry name" value="ENOLASE"/>
    <property type="match status" value="1"/>
</dbReference>
<gene>
    <name evidence="1" type="primary">eno</name>
    <name type="ordered locus">MUL_4631</name>
</gene>
<sequence>MPIIEQVGAREILDSRGNPTVEVEVALIDGTFARAAVPSGASTGEHEAVELRDGGDRYGGKGVKKAVEAVLDEIGPAVIGLNADDQRLVDQALVDLDGTPDKSRLGGNSILGVSLAVAKAASESAELPLFRYIGGPNAHILPVPMMNILNGGAHADTGVDIQEFMVAPIGAPSFSEALRWGAEVYHALKAVLKKAGLSTGLGDEGGFAPDVASTTAALDLISQAIEAAGFKPGVDVALALDAAANEFHADGSYTFEGTPRTAAQMTEFYAGLLGSYPVVSIEDPLYENDWDGWAALTAEIGDRVQIVGDDVFVTNPERLEEGIDRGVANALLVKVNQIGTLTETLDAVALAHHSGYRTMISHRSGETEDTIIADLAVAVGSGQIKTGAPARSERVAKYNQLLRIEEALGDAARYAGDLAFPRFVADPK</sequence>
<comment type="function">
    <text evidence="1">Catalyzes the reversible conversion of 2-phosphoglycerate (2-PG) into phosphoenolpyruvate (PEP). It is essential for the degradation of carbohydrates via glycolysis.</text>
</comment>
<comment type="catalytic activity">
    <reaction evidence="1">
        <text>(2R)-2-phosphoglycerate = phosphoenolpyruvate + H2O</text>
        <dbReference type="Rhea" id="RHEA:10164"/>
        <dbReference type="ChEBI" id="CHEBI:15377"/>
        <dbReference type="ChEBI" id="CHEBI:58289"/>
        <dbReference type="ChEBI" id="CHEBI:58702"/>
        <dbReference type="EC" id="4.2.1.11"/>
    </reaction>
</comment>
<comment type="cofactor">
    <cofactor evidence="1">
        <name>Mg(2+)</name>
        <dbReference type="ChEBI" id="CHEBI:18420"/>
    </cofactor>
    <text evidence="1">Binds a second Mg(2+) ion via substrate during catalysis.</text>
</comment>
<comment type="pathway">
    <text evidence="1">Carbohydrate degradation; glycolysis; pyruvate from D-glyceraldehyde 3-phosphate: step 4/5.</text>
</comment>
<comment type="subcellular location">
    <subcellularLocation>
        <location evidence="1">Cytoplasm</location>
    </subcellularLocation>
    <subcellularLocation>
        <location evidence="1">Secreted</location>
    </subcellularLocation>
    <subcellularLocation>
        <location evidence="1">Cell surface</location>
    </subcellularLocation>
    <text evidence="1">Fractions of enolase are present in both the cytoplasm and on the cell surface.</text>
</comment>
<comment type="similarity">
    <text evidence="1">Belongs to the enolase family.</text>
</comment>
<accession>A0PW55</accession>
<name>ENO_MYCUA</name>